<keyword id="KW-0007">Acetylation</keyword>
<keyword id="KW-0025">Alternative splicing</keyword>
<keyword id="KW-0112">Calmodulin-binding</keyword>
<keyword id="KW-0175">Coiled coil</keyword>
<keyword id="KW-0963">Cytoplasm</keyword>
<keyword id="KW-0472">Membrane</keyword>
<keyword id="KW-0597">Phosphoprotein</keyword>
<keyword id="KW-1185">Reference proteome</keyword>
<keyword id="KW-0677">Repeat</keyword>
<keyword id="KW-0853">WD repeat</keyword>
<sequence>MDELAGGGGGQGMAVPPRPQQGPGGNLSLPPGANGAPGGGGPPAAETAGPPAGPELSRPQQYTIPGILHYIQHEWARFEMERAHWEVERAELQARIAFLQGERKGQENLKKDLVRRIKMLEYALKQERAKYHKLKYGTELNQGDLKMPTFESEETKDAEAPPAQNSQLTWKQGRQLLRQYLQEVGYTDTILDVRSQRVRSLLGLSNSEPNGSIEAKNLEQILNGGESPKQKGQEIKRPSGDVLETFNFLENADDSDEEENDMIEGIPEGKDKLRIHKHKIGNEGLAADLTDDPDTEEALKEFDFLVTAEDGEGAGEARSSGDGTEWDKDDLSPTAEVWDVDQGLMSKLKEQYKKERKGKRGAKRVNRTNLCDMITDLGDDELPHIPSGIINQSRSASTRMTDHEGSRAEEAEPITFPSGGGKSFIMGSDDVLLSVLGLGDLADLTVTNDADYSYDLPANKDALRKTWNPKYTLRSHFDGVRALAFHPVEPVLVTASEDHTLKLWNLQKTVPAKKSASLDVEPIYTFRAHIGPVLSLAISSNGEQCFSGGIDATIQWWNMPSPNVDPYDTYESHVLAGTLVAHTDAVWGLAYSGIKNQLLSCSADGTIRLWNPQEKLPCICTYNGDKEHGIPTSVDFIGCDPAHMVTSFNTGSAIIYDLETSQSLVMLSSQVDSGLQSSNHINRVVSHPTLPVTITAHEDRHIKFFDNKTGKMIHSMVAHLDAVTSLAVDPNGIYLMSGSHDCSIRLWNLDSKTCVQEITAHRKKLDESIYDVAFHPSKAYIASAGADALAKVFV</sequence>
<name>STRN3_RAT</name>
<comment type="function">
    <text evidence="2">Calmodulin-binding scaffolding protein which is the center of the striatin-interacting phosphatase and kinase (STRIPAK) complexes. STRIPAK complexes have critical roles in protein (de)phosphorylation and are regulators of multiple signaling pathways including Hippo, MAPK, nuclear receptor and cytoskeleton remodeling. Different types of STRIPAK complexes are involved in a variety of biological processes such as cell growth, differentiation, apoptosis, metabolism and immune regulation.</text>
</comment>
<comment type="subunit">
    <text evidence="2">Tetramerizes. Part of the core of STRIPAK complexes composed of PP2A catalytic and scaffolding subunits, the striatins (PP2A regulatory subunits), the striatin-associated proteins MOB4, STRIP1 and STRIP2, PDCD10 and members of the STE20 kinases, such as STK24 and STK26. The STRIPAK complex can be extended by adapter proteins such as SLMAP:SIKE1 or CTTNBP2NL. Interacts with CDC42BPB.</text>
</comment>
<comment type="subcellular location">
    <subcellularLocation>
        <location evidence="1">Cytoplasm</location>
    </subcellularLocation>
    <subcellularLocation>
        <location evidence="1">Membrane</location>
        <topology evidence="1">Peripheral membrane protein</topology>
    </subcellularLocation>
</comment>
<comment type="alternative products">
    <event type="alternative splicing"/>
    <isoform>
        <id>P58405-1</id>
        <name>1</name>
        <sequence type="displayed"/>
    </isoform>
    <isoform>
        <id>P58405-2</id>
        <name>2</name>
        <sequence type="described" ref="VSP_026164 VSP_026165"/>
    </isoform>
</comment>
<comment type="similarity">
    <text evidence="7">Belongs to the WD repeat striatin family.</text>
</comment>
<reference key="1">
    <citation type="journal article" date="2004" name="Nature">
        <title>Genome sequence of the Brown Norway rat yields insights into mammalian evolution.</title>
        <authorList>
            <person name="Gibbs R.A."/>
            <person name="Weinstock G.M."/>
            <person name="Metzker M.L."/>
            <person name="Muzny D.M."/>
            <person name="Sodergren E.J."/>
            <person name="Scherer S."/>
            <person name="Scott G."/>
            <person name="Steffen D."/>
            <person name="Worley K.C."/>
            <person name="Burch P.E."/>
            <person name="Okwuonu G."/>
            <person name="Hines S."/>
            <person name="Lewis L."/>
            <person name="Deramo C."/>
            <person name="Delgado O."/>
            <person name="Dugan-Rocha S."/>
            <person name="Miner G."/>
            <person name="Morgan M."/>
            <person name="Hawes A."/>
            <person name="Gill R."/>
            <person name="Holt R.A."/>
            <person name="Adams M.D."/>
            <person name="Amanatides P.G."/>
            <person name="Baden-Tillson H."/>
            <person name="Barnstead M."/>
            <person name="Chin S."/>
            <person name="Evans C.A."/>
            <person name="Ferriera S."/>
            <person name="Fosler C."/>
            <person name="Glodek A."/>
            <person name="Gu Z."/>
            <person name="Jennings D."/>
            <person name="Kraft C.L."/>
            <person name="Nguyen T."/>
            <person name="Pfannkoch C.M."/>
            <person name="Sitter C."/>
            <person name="Sutton G.G."/>
            <person name="Venter J.C."/>
            <person name="Woodage T."/>
            <person name="Smith D."/>
            <person name="Lee H.-M."/>
            <person name="Gustafson E."/>
            <person name="Cahill P."/>
            <person name="Kana A."/>
            <person name="Doucette-Stamm L."/>
            <person name="Weinstock K."/>
            <person name="Fechtel K."/>
            <person name="Weiss R.B."/>
            <person name="Dunn D.M."/>
            <person name="Green E.D."/>
            <person name="Blakesley R.W."/>
            <person name="Bouffard G.G."/>
            <person name="De Jong P.J."/>
            <person name="Osoegawa K."/>
            <person name="Zhu B."/>
            <person name="Marra M."/>
            <person name="Schein J."/>
            <person name="Bosdet I."/>
            <person name="Fjell C."/>
            <person name="Jones S."/>
            <person name="Krzywinski M."/>
            <person name="Mathewson C."/>
            <person name="Siddiqui A."/>
            <person name="Wye N."/>
            <person name="McPherson J."/>
            <person name="Zhao S."/>
            <person name="Fraser C.M."/>
            <person name="Shetty J."/>
            <person name="Shatsman S."/>
            <person name="Geer K."/>
            <person name="Chen Y."/>
            <person name="Abramzon S."/>
            <person name="Nierman W.C."/>
            <person name="Havlak P.H."/>
            <person name="Chen R."/>
            <person name="Durbin K.J."/>
            <person name="Egan A."/>
            <person name="Ren Y."/>
            <person name="Song X.-Z."/>
            <person name="Li B."/>
            <person name="Liu Y."/>
            <person name="Qin X."/>
            <person name="Cawley S."/>
            <person name="Cooney A.J."/>
            <person name="D'Souza L.M."/>
            <person name="Martin K."/>
            <person name="Wu J.Q."/>
            <person name="Gonzalez-Garay M.L."/>
            <person name="Jackson A.R."/>
            <person name="Kalafus K.J."/>
            <person name="McLeod M.P."/>
            <person name="Milosavljevic A."/>
            <person name="Virk D."/>
            <person name="Volkov A."/>
            <person name="Wheeler D.A."/>
            <person name="Zhang Z."/>
            <person name="Bailey J.A."/>
            <person name="Eichler E.E."/>
            <person name="Tuzun E."/>
            <person name="Birney E."/>
            <person name="Mongin E."/>
            <person name="Ureta-Vidal A."/>
            <person name="Woodwark C."/>
            <person name="Zdobnov E."/>
            <person name="Bork P."/>
            <person name="Suyama M."/>
            <person name="Torrents D."/>
            <person name="Alexandersson M."/>
            <person name="Trask B.J."/>
            <person name="Young J.M."/>
            <person name="Huang H."/>
            <person name="Wang H."/>
            <person name="Xing H."/>
            <person name="Daniels S."/>
            <person name="Gietzen D."/>
            <person name="Schmidt J."/>
            <person name="Stevens K."/>
            <person name="Vitt U."/>
            <person name="Wingrove J."/>
            <person name="Camara F."/>
            <person name="Mar Alba M."/>
            <person name="Abril J.F."/>
            <person name="Guigo R."/>
            <person name="Smit A."/>
            <person name="Dubchak I."/>
            <person name="Rubin E.M."/>
            <person name="Couronne O."/>
            <person name="Poliakov A."/>
            <person name="Huebner N."/>
            <person name="Ganten D."/>
            <person name="Goesele C."/>
            <person name="Hummel O."/>
            <person name="Kreitler T."/>
            <person name="Lee Y.-A."/>
            <person name="Monti J."/>
            <person name="Schulz H."/>
            <person name="Zimdahl H."/>
            <person name="Himmelbauer H."/>
            <person name="Lehrach H."/>
            <person name="Jacob H.J."/>
            <person name="Bromberg S."/>
            <person name="Gullings-Handley J."/>
            <person name="Jensen-Seaman M.I."/>
            <person name="Kwitek A.E."/>
            <person name="Lazar J."/>
            <person name="Pasko D."/>
            <person name="Tonellato P.J."/>
            <person name="Twigger S."/>
            <person name="Ponting C.P."/>
            <person name="Duarte J.M."/>
            <person name="Rice S."/>
            <person name="Goodstadt L."/>
            <person name="Beatson S.A."/>
            <person name="Emes R.D."/>
            <person name="Winter E.E."/>
            <person name="Webber C."/>
            <person name="Brandt P."/>
            <person name="Nyakatura G."/>
            <person name="Adetobi M."/>
            <person name="Chiaromonte F."/>
            <person name="Elnitski L."/>
            <person name="Eswara P."/>
            <person name="Hardison R.C."/>
            <person name="Hou M."/>
            <person name="Kolbe D."/>
            <person name="Makova K."/>
            <person name="Miller W."/>
            <person name="Nekrutenko A."/>
            <person name="Riemer C."/>
            <person name="Schwartz S."/>
            <person name="Taylor J."/>
            <person name="Yang S."/>
            <person name="Zhang Y."/>
            <person name="Lindpaintner K."/>
            <person name="Andrews T.D."/>
            <person name="Caccamo M."/>
            <person name="Clamp M."/>
            <person name="Clarke L."/>
            <person name="Curwen V."/>
            <person name="Durbin R.M."/>
            <person name="Eyras E."/>
            <person name="Searle S.M."/>
            <person name="Cooper G.M."/>
            <person name="Batzoglou S."/>
            <person name="Brudno M."/>
            <person name="Sidow A."/>
            <person name="Stone E.A."/>
            <person name="Payseur B.A."/>
            <person name="Bourque G."/>
            <person name="Lopez-Otin C."/>
            <person name="Puente X.S."/>
            <person name="Chakrabarti K."/>
            <person name="Chatterji S."/>
            <person name="Dewey C."/>
            <person name="Pachter L."/>
            <person name="Bray N."/>
            <person name="Yap V.B."/>
            <person name="Caspi A."/>
            <person name="Tesler G."/>
            <person name="Pevzner P.A."/>
            <person name="Haussler D."/>
            <person name="Roskin K.M."/>
            <person name="Baertsch R."/>
            <person name="Clawson H."/>
            <person name="Furey T.S."/>
            <person name="Hinrichs A.S."/>
            <person name="Karolchik D."/>
            <person name="Kent W.J."/>
            <person name="Rosenbloom K.R."/>
            <person name="Trumbower H."/>
            <person name="Weirauch M."/>
            <person name="Cooper D.N."/>
            <person name="Stenson P.D."/>
            <person name="Ma B."/>
            <person name="Brent M."/>
            <person name="Arumugam M."/>
            <person name="Shteynberg D."/>
            <person name="Copley R.R."/>
            <person name="Taylor M.S."/>
            <person name="Riethman H."/>
            <person name="Mudunuri U."/>
            <person name="Peterson J."/>
            <person name="Guyer M."/>
            <person name="Felsenfeld A."/>
            <person name="Old S."/>
            <person name="Mockrin S."/>
            <person name="Collins F.S."/>
        </authorList>
    </citation>
    <scope>NUCLEOTIDE SEQUENCE [LARGE SCALE GENOMIC DNA]</scope>
    <source>
        <strain>Brown Norway</strain>
    </source>
</reference>
<reference key="2">
    <citation type="submission" date="2001-01" db="EMBL/GenBank/DDBJ databases">
        <title>Rat SG2NA gene partial sequence.</title>
        <authorList>
            <person name="Long X."/>
            <person name="Bigsby R.M."/>
            <person name="Nephew K.P."/>
        </authorList>
    </citation>
    <scope>NUCLEOTIDE SEQUENCE [MRNA] OF 1-529 (ISOFORM 2)</scope>
    <source>
        <strain>Sprague-Dawley</strain>
    </source>
</reference>
<reference key="3">
    <citation type="journal article" date="2012" name="Nat. Commun.">
        <title>Quantitative maps of protein phosphorylation sites across 14 different rat organs and tissues.</title>
        <authorList>
            <person name="Lundby A."/>
            <person name="Secher A."/>
            <person name="Lage K."/>
            <person name="Nordsborg N.B."/>
            <person name="Dmytriyev A."/>
            <person name="Lundby C."/>
            <person name="Olsen J.V."/>
        </authorList>
    </citation>
    <scope>PHOSPHORYLATION [LARGE SCALE ANALYSIS] AT THR-149; SER-227; SER-255 AND SER-332</scope>
    <scope>IDENTIFICATION BY MASS SPECTROMETRY [LARGE SCALE ANALYSIS]</scope>
</reference>
<proteinExistence type="evidence at protein level"/>
<dbReference type="EMBL" id="AABR03048613">
    <property type="status" value="NOT_ANNOTATED_CDS"/>
    <property type="molecule type" value="Genomic_DNA"/>
</dbReference>
<dbReference type="EMBL" id="AY026526">
    <property type="protein sequence ID" value="AAK07683.1"/>
    <property type="molecule type" value="mRNA"/>
</dbReference>
<dbReference type="RefSeq" id="NP_001025068.1">
    <molecule id="P58405-1"/>
    <property type="nucleotide sequence ID" value="NM_001029897.3"/>
</dbReference>
<dbReference type="SMR" id="P58405"/>
<dbReference type="BioGRID" id="250366">
    <property type="interactions" value="1"/>
</dbReference>
<dbReference type="CORUM" id="P58405"/>
<dbReference type="FunCoup" id="P58405">
    <property type="interactions" value="3413"/>
</dbReference>
<dbReference type="IntAct" id="P58405">
    <property type="interactions" value="1"/>
</dbReference>
<dbReference type="STRING" id="10116.ENSRNOP00000074395"/>
<dbReference type="iPTMnet" id="P58405"/>
<dbReference type="PhosphoSitePlus" id="P58405"/>
<dbReference type="jPOST" id="P58405"/>
<dbReference type="PaxDb" id="10116-ENSRNOP00000007509"/>
<dbReference type="Ensembl" id="ENSRNOT00000077578.2">
    <molecule id="P58405-1"/>
    <property type="protein sequence ID" value="ENSRNOP00000074395.1"/>
    <property type="gene ID" value="ENSRNOG00000060335.2"/>
</dbReference>
<dbReference type="GeneID" id="114520"/>
<dbReference type="KEGG" id="rno:114520"/>
<dbReference type="UCSC" id="RGD:621827">
    <molecule id="P58405-1"/>
    <property type="organism name" value="rat"/>
</dbReference>
<dbReference type="AGR" id="RGD:621827"/>
<dbReference type="CTD" id="29966"/>
<dbReference type="RGD" id="621827">
    <property type="gene designation" value="Strn3"/>
</dbReference>
<dbReference type="eggNOG" id="KOG0642">
    <property type="taxonomic scope" value="Eukaryota"/>
</dbReference>
<dbReference type="GeneTree" id="ENSGT00950000183095"/>
<dbReference type="InParanoid" id="P58405"/>
<dbReference type="OMA" id="SKCSQEV"/>
<dbReference type="OrthoDB" id="48255at9989"/>
<dbReference type="PhylomeDB" id="P58405"/>
<dbReference type="TreeFam" id="TF313387"/>
<dbReference type="PRO" id="PR:P58405"/>
<dbReference type="Proteomes" id="UP000002494">
    <property type="component" value="Chromosome 6"/>
</dbReference>
<dbReference type="Bgee" id="ENSRNOG00000060335">
    <property type="expression patterns" value="Expressed in quadriceps femoris and 20 other cell types or tissues"/>
</dbReference>
<dbReference type="ExpressionAtlas" id="P58405">
    <property type="expression patterns" value="baseline and differential"/>
</dbReference>
<dbReference type="GO" id="GO:0030425">
    <property type="term" value="C:dendrite"/>
    <property type="evidence" value="ECO:0000314"/>
    <property type="project" value="RGD"/>
</dbReference>
<dbReference type="GO" id="GO:0090443">
    <property type="term" value="C:FAR/SIN/STRIPAK complex"/>
    <property type="evidence" value="ECO:0000250"/>
    <property type="project" value="UniProtKB"/>
</dbReference>
<dbReference type="GO" id="GO:0005794">
    <property type="term" value="C:Golgi apparatus"/>
    <property type="evidence" value="ECO:0000266"/>
    <property type="project" value="RGD"/>
</dbReference>
<dbReference type="GO" id="GO:0043025">
    <property type="term" value="C:neuronal cell body"/>
    <property type="evidence" value="ECO:0000314"/>
    <property type="project" value="RGD"/>
</dbReference>
<dbReference type="GO" id="GO:0005654">
    <property type="term" value="C:nucleoplasm"/>
    <property type="evidence" value="ECO:0000266"/>
    <property type="project" value="RGD"/>
</dbReference>
<dbReference type="GO" id="GO:0005886">
    <property type="term" value="C:plasma membrane"/>
    <property type="evidence" value="ECO:0000266"/>
    <property type="project" value="RGD"/>
</dbReference>
<dbReference type="GO" id="GO:0098794">
    <property type="term" value="C:postsynapse"/>
    <property type="evidence" value="ECO:0000266"/>
    <property type="project" value="RGD"/>
</dbReference>
<dbReference type="GO" id="GO:0032991">
    <property type="term" value="C:protein-containing complex"/>
    <property type="evidence" value="ECO:0000314"/>
    <property type="project" value="RGD"/>
</dbReference>
<dbReference type="GO" id="GO:0070016">
    <property type="term" value="F:armadillo repeat domain binding"/>
    <property type="evidence" value="ECO:0000266"/>
    <property type="project" value="RGD"/>
</dbReference>
<dbReference type="GO" id="GO:0005516">
    <property type="term" value="F:calmodulin binding"/>
    <property type="evidence" value="ECO:0000318"/>
    <property type="project" value="GO_Central"/>
</dbReference>
<dbReference type="GO" id="GO:0019901">
    <property type="term" value="F:protein kinase binding"/>
    <property type="evidence" value="ECO:0000266"/>
    <property type="project" value="RGD"/>
</dbReference>
<dbReference type="GO" id="GO:0051721">
    <property type="term" value="F:protein phosphatase 2A binding"/>
    <property type="evidence" value="ECO:0000266"/>
    <property type="project" value="RGD"/>
</dbReference>
<dbReference type="GO" id="GO:0044877">
    <property type="term" value="F:protein-containing complex binding"/>
    <property type="evidence" value="ECO:0000314"/>
    <property type="project" value="RGD"/>
</dbReference>
<dbReference type="GO" id="GO:0030674">
    <property type="term" value="F:protein-macromolecule adaptor activity"/>
    <property type="evidence" value="ECO:0000250"/>
    <property type="project" value="UniProtKB"/>
</dbReference>
<dbReference type="GO" id="GO:0031267">
    <property type="term" value="F:small GTPase binding"/>
    <property type="evidence" value="ECO:0000266"/>
    <property type="project" value="RGD"/>
</dbReference>
<dbReference type="GO" id="GO:0045892">
    <property type="term" value="P:negative regulation of DNA-templated transcription"/>
    <property type="evidence" value="ECO:0000315"/>
    <property type="project" value="RGD"/>
</dbReference>
<dbReference type="GO" id="GO:0035331">
    <property type="term" value="P:negative regulation of hippo signaling"/>
    <property type="evidence" value="ECO:0000250"/>
    <property type="project" value="UniProtKB"/>
</dbReference>
<dbReference type="GO" id="GO:0033147">
    <property type="term" value="P:negative regulation of intracellular estrogen receptor signaling pathway"/>
    <property type="evidence" value="ECO:0000315"/>
    <property type="project" value="RGD"/>
</dbReference>
<dbReference type="GO" id="GO:0032355">
    <property type="term" value="P:response to estradiol"/>
    <property type="evidence" value="ECO:0000314"/>
    <property type="project" value="RGD"/>
</dbReference>
<dbReference type="CDD" id="cd00200">
    <property type="entry name" value="WD40"/>
    <property type="match status" value="1"/>
</dbReference>
<dbReference type="FunFam" id="1.20.5.300:FF:000001">
    <property type="entry name" value="striatin isoform X1"/>
    <property type="match status" value="1"/>
</dbReference>
<dbReference type="FunFam" id="2.130.10.10:FF:000616">
    <property type="entry name" value="Striatin-3 isoform B"/>
    <property type="match status" value="1"/>
</dbReference>
<dbReference type="FunFam" id="2.130.10.10:FF:000110">
    <property type="entry name" value="striatin-3 isoform X2"/>
    <property type="match status" value="1"/>
</dbReference>
<dbReference type="FunFam" id="2.130.10.10:FF:000134">
    <property type="entry name" value="striatin-3 isoform X2"/>
    <property type="match status" value="1"/>
</dbReference>
<dbReference type="Gene3D" id="1.20.5.300">
    <property type="match status" value="1"/>
</dbReference>
<dbReference type="Gene3D" id="2.130.10.10">
    <property type="entry name" value="YVTN repeat-like/Quinoprotein amine dehydrogenase"/>
    <property type="match status" value="3"/>
</dbReference>
<dbReference type="InterPro" id="IPR020472">
    <property type="entry name" value="G-protein_beta_WD-40_rep"/>
</dbReference>
<dbReference type="InterPro" id="IPR013258">
    <property type="entry name" value="Striatin_N"/>
</dbReference>
<dbReference type="InterPro" id="IPR015943">
    <property type="entry name" value="WD40/YVTN_repeat-like_dom_sf"/>
</dbReference>
<dbReference type="InterPro" id="IPR019775">
    <property type="entry name" value="WD40_repeat_CS"/>
</dbReference>
<dbReference type="InterPro" id="IPR036322">
    <property type="entry name" value="WD40_repeat_dom_sf"/>
</dbReference>
<dbReference type="InterPro" id="IPR001680">
    <property type="entry name" value="WD40_rpt"/>
</dbReference>
<dbReference type="InterPro" id="IPR051488">
    <property type="entry name" value="WD_repeat_striatin"/>
</dbReference>
<dbReference type="PANTHER" id="PTHR15653">
    <property type="entry name" value="STRIATIN"/>
    <property type="match status" value="1"/>
</dbReference>
<dbReference type="PANTHER" id="PTHR15653:SF3">
    <property type="entry name" value="STRIATIN-3"/>
    <property type="match status" value="1"/>
</dbReference>
<dbReference type="Pfam" id="PF08232">
    <property type="entry name" value="Striatin"/>
    <property type="match status" value="1"/>
</dbReference>
<dbReference type="Pfam" id="PF00400">
    <property type="entry name" value="WD40"/>
    <property type="match status" value="5"/>
</dbReference>
<dbReference type="PRINTS" id="PR00320">
    <property type="entry name" value="GPROTEINBRPT"/>
</dbReference>
<dbReference type="SMART" id="SM00320">
    <property type="entry name" value="WD40"/>
    <property type="match status" value="7"/>
</dbReference>
<dbReference type="SUPFAM" id="SSF50978">
    <property type="entry name" value="WD40 repeat-like"/>
    <property type="match status" value="1"/>
</dbReference>
<dbReference type="PROSITE" id="PS00678">
    <property type="entry name" value="WD_REPEATS_1"/>
    <property type="match status" value="2"/>
</dbReference>
<dbReference type="PROSITE" id="PS50082">
    <property type="entry name" value="WD_REPEATS_2"/>
    <property type="match status" value="4"/>
</dbReference>
<dbReference type="PROSITE" id="PS50294">
    <property type="entry name" value="WD_REPEATS_REGION"/>
    <property type="match status" value="1"/>
</dbReference>
<protein>
    <recommendedName>
        <fullName>Striatin-3</fullName>
    </recommendedName>
    <alternativeName>
        <fullName>Cell cycle autoantigen SG2NA</fullName>
    </alternativeName>
    <alternativeName>
        <fullName>S/G2 antigen</fullName>
    </alternativeName>
</protein>
<accession>P58405</accession>
<organism>
    <name type="scientific">Rattus norvegicus</name>
    <name type="common">Rat</name>
    <dbReference type="NCBI Taxonomy" id="10116"/>
    <lineage>
        <taxon>Eukaryota</taxon>
        <taxon>Metazoa</taxon>
        <taxon>Chordata</taxon>
        <taxon>Craniata</taxon>
        <taxon>Vertebrata</taxon>
        <taxon>Euteleostomi</taxon>
        <taxon>Mammalia</taxon>
        <taxon>Eutheria</taxon>
        <taxon>Euarchontoglires</taxon>
        <taxon>Glires</taxon>
        <taxon>Rodentia</taxon>
        <taxon>Myomorpha</taxon>
        <taxon>Muroidea</taxon>
        <taxon>Muridae</taxon>
        <taxon>Murinae</taxon>
        <taxon>Rattus</taxon>
    </lineage>
</organism>
<evidence type="ECO:0000250" key="1"/>
<evidence type="ECO:0000250" key="2">
    <source>
        <dbReference type="UniProtKB" id="Q13033"/>
    </source>
</evidence>
<evidence type="ECO:0000250" key="3">
    <source>
        <dbReference type="UniProtKB" id="Q9ERG2"/>
    </source>
</evidence>
<evidence type="ECO:0000255" key="4"/>
<evidence type="ECO:0000256" key="5">
    <source>
        <dbReference type="SAM" id="MobiDB-lite"/>
    </source>
</evidence>
<evidence type="ECO:0000303" key="6">
    <source ref="2"/>
</evidence>
<evidence type="ECO:0000305" key="7"/>
<evidence type="ECO:0007744" key="8">
    <source>
    </source>
</evidence>
<feature type="chain" id="PRO_0000051238" description="Striatin-3">
    <location>
        <begin position="1"/>
        <end position="794"/>
    </location>
</feature>
<feature type="repeat" description="WD 1">
    <location>
        <begin position="475"/>
        <end position="514"/>
    </location>
</feature>
<feature type="repeat" description="WD 2">
    <location>
        <begin position="528"/>
        <end position="567"/>
    </location>
</feature>
<feature type="repeat" description="WD 3">
    <location>
        <begin position="581"/>
        <end position="620"/>
    </location>
</feature>
<feature type="repeat" description="WD 4">
    <location>
        <begin position="676"/>
        <end position="715"/>
    </location>
</feature>
<feature type="repeat" description="WD 5">
    <location>
        <begin position="718"/>
        <end position="757"/>
    </location>
</feature>
<feature type="repeat" description="WD 6">
    <location>
        <begin position="764"/>
        <end position="794"/>
    </location>
</feature>
<feature type="region of interest" description="Disordered" evidence="5">
    <location>
        <begin position="1"/>
        <end position="59"/>
    </location>
</feature>
<feature type="region of interest" description="Caveolin-binding" evidence="4">
    <location>
        <begin position="70"/>
        <end position="78"/>
    </location>
</feature>
<feature type="region of interest" description="Calmodulin-binding" evidence="4">
    <location>
        <begin position="164"/>
        <end position="181"/>
    </location>
</feature>
<feature type="region of interest" description="Disordered" evidence="5">
    <location>
        <begin position="309"/>
        <end position="339"/>
    </location>
</feature>
<feature type="coiled-coil region" evidence="4">
    <location>
        <begin position="76"/>
        <end position="135"/>
    </location>
</feature>
<feature type="compositionally biased region" description="Gly residues" evidence="5">
    <location>
        <begin position="1"/>
        <end position="12"/>
    </location>
</feature>
<feature type="modified residue" description="N-acetylmethionine" evidence="2">
    <location>
        <position position="1"/>
    </location>
</feature>
<feature type="modified residue" description="Phosphothreonine" evidence="8">
    <location>
        <position position="149"/>
    </location>
</feature>
<feature type="modified residue" description="Phosphoserine" evidence="3">
    <location>
        <position position="200"/>
    </location>
</feature>
<feature type="modified residue" description="Phosphoserine" evidence="2">
    <location>
        <position position="212"/>
    </location>
</feature>
<feature type="modified residue" description="Phosphoserine" evidence="8">
    <location>
        <position position="227"/>
    </location>
</feature>
<feature type="modified residue" description="Phosphoserine" evidence="8">
    <location>
        <position position="255"/>
    </location>
</feature>
<feature type="modified residue" description="Phosphoserine" evidence="8">
    <location>
        <position position="332"/>
    </location>
</feature>
<feature type="splice variant" id="VSP_026164" description="In isoform 2." evidence="6">
    <original>G</original>
    <variation>GGQGMAVPPRPQQGRGG</variation>
    <location>
        <position position="9"/>
    </location>
</feature>
<feature type="splice variant" id="VSP_026165" description="In isoform 2." evidence="6">
    <location>
        <begin position="327"/>
        <end position="410"/>
    </location>
</feature>
<gene>
    <name type="primary">Strn3</name>
    <name type="synonym">Gs2na</name>
    <name type="synonym">Sg2na</name>
</gene>